<gene>
    <name evidence="1" type="primary">rpsK</name>
    <name type="ordered locus">PA4240</name>
</gene>
<dbReference type="EMBL" id="AE004091">
    <property type="protein sequence ID" value="AAG07628.1"/>
    <property type="molecule type" value="Genomic_DNA"/>
</dbReference>
<dbReference type="PIR" id="F83113">
    <property type="entry name" value="F83113"/>
</dbReference>
<dbReference type="RefSeq" id="NP_252930.1">
    <property type="nucleotide sequence ID" value="NC_002516.2"/>
</dbReference>
<dbReference type="RefSeq" id="WP_003093689.1">
    <property type="nucleotide sequence ID" value="NZ_QZGE01000028.1"/>
</dbReference>
<dbReference type="PDB" id="7UNR">
    <property type="method" value="EM"/>
    <property type="resolution" value="2.90 A"/>
    <property type="chains" value="k=1-129"/>
</dbReference>
<dbReference type="PDB" id="7UNU">
    <property type="method" value="EM"/>
    <property type="resolution" value="2.90 A"/>
    <property type="chains" value="k=1-129"/>
</dbReference>
<dbReference type="PDB" id="7UNV">
    <property type="method" value="EM"/>
    <property type="resolution" value="2.70 A"/>
    <property type="chains" value="k=1-129"/>
</dbReference>
<dbReference type="PDB" id="7UNW">
    <property type="method" value="EM"/>
    <property type="resolution" value="2.60 A"/>
    <property type="chains" value="k=1-129"/>
</dbReference>
<dbReference type="PDB" id="8CD1">
    <property type="method" value="EM"/>
    <property type="resolution" value="3.00 A"/>
    <property type="chains" value="k=1-129"/>
</dbReference>
<dbReference type="PDB" id="8RWG">
    <property type="method" value="EM"/>
    <property type="resolution" value="2.46 A"/>
    <property type="chains" value="j=1-129"/>
</dbReference>
<dbReference type="PDBsum" id="7UNR"/>
<dbReference type="PDBsum" id="7UNU"/>
<dbReference type="PDBsum" id="7UNV"/>
<dbReference type="PDBsum" id="7UNW"/>
<dbReference type="PDBsum" id="8CD1"/>
<dbReference type="PDBsum" id="8RWG"/>
<dbReference type="EMDB" id="EMD-16566"/>
<dbReference type="EMDB" id="EMD-19547"/>
<dbReference type="EMDB" id="EMD-26630"/>
<dbReference type="EMDB" id="EMD-26633"/>
<dbReference type="EMDB" id="EMD-26634"/>
<dbReference type="EMDB" id="EMD-26635"/>
<dbReference type="SMR" id="Q9HWF8"/>
<dbReference type="FunCoup" id="Q9HWF8">
    <property type="interactions" value="780"/>
</dbReference>
<dbReference type="STRING" id="208964.PA4240"/>
<dbReference type="PaxDb" id="208964-PA4240"/>
<dbReference type="GeneID" id="881817"/>
<dbReference type="GeneID" id="88184059"/>
<dbReference type="KEGG" id="pae:PA4240"/>
<dbReference type="PATRIC" id="fig|208964.12.peg.4441"/>
<dbReference type="PseudoCAP" id="PA4240"/>
<dbReference type="HOGENOM" id="CLU_072439_5_0_6"/>
<dbReference type="InParanoid" id="Q9HWF8"/>
<dbReference type="OrthoDB" id="9806415at2"/>
<dbReference type="PhylomeDB" id="Q9HWF8"/>
<dbReference type="BioCyc" id="PAER208964:G1FZ6-4313-MONOMER"/>
<dbReference type="PRO" id="PR:Q9HWF8"/>
<dbReference type="Proteomes" id="UP000002438">
    <property type="component" value="Chromosome"/>
</dbReference>
<dbReference type="GO" id="GO:0022627">
    <property type="term" value="C:cytosolic small ribosomal subunit"/>
    <property type="evidence" value="ECO:0000318"/>
    <property type="project" value="GO_Central"/>
</dbReference>
<dbReference type="GO" id="GO:0019843">
    <property type="term" value="F:rRNA binding"/>
    <property type="evidence" value="ECO:0007669"/>
    <property type="project" value="UniProtKB-UniRule"/>
</dbReference>
<dbReference type="GO" id="GO:0003735">
    <property type="term" value="F:structural constituent of ribosome"/>
    <property type="evidence" value="ECO:0000318"/>
    <property type="project" value="GO_Central"/>
</dbReference>
<dbReference type="GO" id="GO:0006412">
    <property type="term" value="P:translation"/>
    <property type="evidence" value="ECO:0000318"/>
    <property type="project" value="GO_Central"/>
</dbReference>
<dbReference type="FunFam" id="3.30.420.80:FF:000001">
    <property type="entry name" value="30S ribosomal protein S11"/>
    <property type="match status" value="1"/>
</dbReference>
<dbReference type="Gene3D" id="3.30.420.80">
    <property type="entry name" value="Ribosomal protein S11"/>
    <property type="match status" value="1"/>
</dbReference>
<dbReference type="HAMAP" id="MF_01310">
    <property type="entry name" value="Ribosomal_uS11"/>
    <property type="match status" value="1"/>
</dbReference>
<dbReference type="InterPro" id="IPR001971">
    <property type="entry name" value="Ribosomal_uS11"/>
</dbReference>
<dbReference type="InterPro" id="IPR019981">
    <property type="entry name" value="Ribosomal_uS11_bac-type"/>
</dbReference>
<dbReference type="InterPro" id="IPR018102">
    <property type="entry name" value="Ribosomal_uS11_CS"/>
</dbReference>
<dbReference type="InterPro" id="IPR036967">
    <property type="entry name" value="Ribosomal_uS11_sf"/>
</dbReference>
<dbReference type="NCBIfam" id="NF003698">
    <property type="entry name" value="PRK05309.1"/>
    <property type="match status" value="1"/>
</dbReference>
<dbReference type="NCBIfam" id="TIGR03632">
    <property type="entry name" value="uS11_bact"/>
    <property type="match status" value="1"/>
</dbReference>
<dbReference type="PANTHER" id="PTHR11759">
    <property type="entry name" value="40S RIBOSOMAL PROTEIN S14/30S RIBOSOMAL PROTEIN S11"/>
    <property type="match status" value="1"/>
</dbReference>
<dbReference type="Pfam" id="PF00411">
    <property type="entry name" value="Ribosomal_S11"/>
    <property type="match status" value="1"/>
</dbReference>
<dbReference type="PIRSF" id="PIRSF002131">
    <property type="entry name" value="Ribosomal_S11"/>
    <property type="match status" value="1"/>
</dbReference>
<dbReference type="SUPFAM" id="SSF53137">
    <property type="entry name" value="Translational machinery components"/>
    <property type="match status" value="1"/>
</dbReference>
<dbReference type="PROSITE" id="PS00054">
    <property type="entry name" value="RIBOSOMAL_S11"/>
    <property type="match status" value="1"/>
</dbReference>
<organism>
    <name type="scientific">Pseudomonas aeruginosa (strain ATCC 15692 / DSM 22644 / CIP 104116 / JCM 14847 / LMG 12228 / 1C / PRS 101 / PAO1)</name>
    <dbReference type="NCBI Taxonomy" id="208964"/>
    <lineage>
        <taxon>Bacteria</taxon>
        <taxon>Pseudomonadati</taxon>
        <taxon>Pseudomonadota</taxon>
        <taxon>Gammaproteobacteria</taxon>
        <taxon>Pseudomonadales</taxon>
        <taxon>Pseudomonadaceae</taxon>
        <taxon>Pseudomonas</taxon>
    </lineage>
</organism>
<name>RS11_PSEAE</name>
<sequence>MAKPAARPRKKVKKTVVDGIAHIHASFNNTIVTITDRQGNALSWATSGGSGFRGSRKSTPFAAQVAAERAGQAALEYGLKNLDVNVKGPGPGRESAVRALNACGYKIASITDVTPIPHNGCRPPKKRRV</sequence>
<keyword id="KW-0002">3D-structure</keyword>
<keyword id="KW-1185">Reference proteome</keyword>
<keyword id="KW-0687">Ribonucleoprotein</keyword>
<keyword id="KW-0689">Ribosomal protein</keyword>
<keyword id="KW-0694">RNA-binding</keyword>
<keyword id="KW-0699">rRNA-binding</keyword>
<accession>Q9HWF8</accession>
<protein>
    <recommendedName>
        <fullName evidence="1">Small ribosomal subunit protein uS11</fullName>
    </recommendedName>
    <alternativeName>
        <fullName evidence="2">30S ribosomal protein S11</fullName>
    </alternativeName>
</protein>
<evidence type="ECO:0000255" key="1">
    <source>
        <dbReference type="HAMAP-Rule" id="MF_01310"/>
    </source>
</evidence>
<evidence type="ECO:0000305" key="2"/>
<comment type="function">
    <text evidence="1">Located on the platform of the 30S subunit, it bridges several disparate RNA helices of the 16S rRNA. Forms part of the Shine-Dalgarno cleft in the 70S ribosome.</text>
</comment>
<comment type="subunit">
    <text evidence="1">Part of the 30S ribosomal subunit. Interacts with proteins S7 and S18. Binds to IF-3.</text>
</comment>
<comment type="similarity">
    <text evidence="1">Belongs to the universal ribosomal protein uS11 family.</text>
</comment>
<reference key="1">
    <citation type="journal article" date="2000" name="Nature">
        <title>Complete genome sequence of Pseudomonas aeruginosa PAO1, an opportunistic pathogen.</title>
        <authorList>
            <person name="Stover C.K."/>
            <person name="Pham X.-Q.T."/>
            <person name="Erwin A.L."/>
            <person name="Mizoguchi S.D."/>
            <person name="Warrener P."/>
            <person name="Hickey M.J."/>
            <person name="Brinkman F.S.L."/>
            <person name="Hufnagle W.O."/>
            <person name="Kowalik D.J."/>
            <person name="Lagrou M."/>
            <person name="Garber R.L."/>
            <person name="Goltry L."/>
            <person name="Tolentino E."/>
            <person name="Westbrock-Wadman S."/>
            <person name="Yuan Y."/>
            <person name="Brody L.L."/>
            <person name="Coulter S.N."/>
            <person name="Folger K.R."/>
            <person name="Kas A."/>
            <person name="Larbig K."/>
            <person name="Lim R.M."/>
            <person name="Smith K.A."/>
            <person name="Spencer D.H."/>
            <person name="Wong G.K.-S."/>
            <person name="Wu Z."/>
            <person name="Paulsen I.T."/>
            <person name="Reizer J."/>
            <person name="Saier M.H. Jr."/>
            <person name="Hancock R.E.W."/>
            <person name="Lory S."/>
            <person name="Olson M.V."/>
        </authorList>
    </citation>
    <scope>NUCLEOTIDE SEQUENCE [LARGE SCALE GENOMIC DNA]</scope>
    <source>
        <strain>ATCC 15692 / DSM 22644 / CIP 104116 / JCM 14847 / LMG 12228 / 1C / PRS 101 / PAO1</strain>
    </source>
</reference>
<proteinExistence type="evidence at protein level"/>
<feature type="chain" id="PRO_0000123201" description="Small ribosomal subunit protein uS11">
    <location>
        <begin position="1"/>
        <end position="129"/>
    </location>
</feature>